<accession>Q7TN33</accession>
<accession>Q8BJ35</accession>
<protein>
    <recommendedName>
        <fullName>CUGBP Elav-like family member 6</fullName>
        <shortName>CELF-6</shortName>
    </recommendedName>
    <alternativeName>
        <fullName>Bruno-like protein 6</fullName>
    </alternativeName>
    <alternativeName>
        <fullName>CUG-BP- and ETR-3-like factor 6</fullName>
    </alternativeName>
    <alternativeName>
        <fullName>RNA-binding protein BRUNOL-6</fullName>
    </alternativeName>
</protein>
<keyword id="KW-0025">Alternative splicing</keyword>
<keyword id="KW-0963">Cytoplasm</keyword>
<keyword id="KW-0507">mRNA processing</keyword>
<keyword id="KW-0539">Nucleus</keyword>
<keyword id="KW-1185">Reference proteome</keyword>
<keyword id="KW-0677">Repeat</keyword>
<keyword id="KW-0694">RNA-binding</keyword>
<dbReference type="EMBL" id="AK034216">
    <property type="protein sequence ID" value="BAC28635.1"/>
    <property type="molecule type" value="mRNA"/>
</dbReference>
<dbReference type="EMBL" id="BC052406">
    <property type="protein sequence ID" value="AAH52406.1"/>
    <property type="molecule type" value="mRNA"/>
</dbReference>
<dbReference type="EMBL" id="BC057083">
    <property type="protein sequence ID" value="AAH57083.1"/>
    <property type="molecule type" value="mRNA"/>
</dbReference>
<dbReference type="CCDS" id="CCDS23251.1">
    <molecule id="Q7TN33-1"/>
</dbReference>
<dbReference type="CCDS" id="CCDS90585.1">
    <molecule id="Q7TN33-2"/>
</dbReference>
<dbReference type="RefSeq" id="NP_001298021.1">
    <property type="nucleotide sequence ID" value="NM_001311092.1"/>
</dbReference>
<dbReference type="RefSeq" id="NP_001348028.1">
    <molecule id="Q7TN33-2"/>
    <property type="nucleotide sequence ID" value="NM_001361099.2"/>
</dbReference>
<dbReference type="RefSeq" id="NP_001400455.1">
    <molecule id="Q7TN33-2"/>
    <property type="nucleotide sequence ID" value="NM_001413526.1"/>
</dbReference>
<dbReference type="RefSeq" id="NP_001400456.1">
    <molecule id="Q7TN33-2"/>
    <property type="nucleotide sequence ID" value="NM_001413527.1"/>
</dbReference>
<dbReference type="RefSeq" id="NP_780444.2">
    <molecule id="Q7TN33-1"/>
    <property type="nucleotide sequence ID" value="NM_175235.3"/>
</dbReference>
<dbReference type="RefSeq" id="XP_006511609.1">
    <property type="nucleotide sequence ID" value="XM_006511546.2"/>
</dbReference>
<dbReference type="RefSeq" id="XP_036011269.1">
    <molecule id="Q7TN33-2"/>
    <property type="nucleotide sequence ID" value="XM_036155376.1"/>
</dbReference>
<dbReference type="RefSeq" id="XP_036011270.1">
    <molecule id="Q7TN33-2"/>
    <property type="nucleotide sequence ID" value="XM_036155377.1"/>
</dbReference>
<dbReference type="SMR" id="Q7TN33"/>
<dbReference type="FunCoup" id="Q7TN33">
    <property type="interactions" value="375"/>
</dbReference>
<dbReference type="STRING" id="10090.ENSMUSP00000034840"/>
<dbReference type="iPTMnet" id="Q7TN33"/>
<dbReference type="PhosphoSitePlus" id="Q7TN33"/>
<dbReference type="PaxDb" id="10090-ENSMUSP00000034840"/>
<dbReference type="ProteomicsDB" id="281372">
    <molecule id="Q7TN33-1"/>
</dbReference>
<dbReference type="ProteomicsDB" id="281373">
    <molecule id="Q7TN33-2"/>
</dbReference>
<dbReference type="DNASU" id="76183"/>
<dbReference type="Ensembl" id="ENSMUST00000034840.10">
    <molecule id="Q7TN33-1"/>
    <property type="protein sequence ID" value="ENSMUSP00000034840.4"/>
    <property type="gene ID" value="ENSMUSG00000032297.12"/>
</dbReference>
<dbReference type="Ensembl" id="ENSMUST00000121266.8">
    <molecule id="Q7TN33-2"/>
    <property type="protein sequence ID" value="ENSMUSP00000113196.2"/>
    <property type="gene ID" value="ENSMUSG00000032297.12"/>
</dbReference>
<dbReference type="GeneID" id="76183"/>
<dbReference type="KEGG" id="mmu:76183"/>
<dbReference type="UCSC" id="uc009pxx.1">
    <molecule id="Q7TN33-1"/>
    <property type="organism name" value="mouse"/>
</dbReference>
<dbReference type="AGR" id="MGI:1923433"/>
<dbReference type="CTD" id="60677"/>
<dbReference type="MGI" id="MGI:1923433">
    <property type="gene designation" value="Celf6"/>
</dbReference>
<dbReference type="VEuPathDB" id="HostDB:ENSMUSG00000032297"/>
<dbReference type="eggNOG" id="KOG0146">
    <property type="taxonomic scope" value="Eukaryota"/>
</dbReference>
<dbReference type="GeneTree" id="ENSGT00940000154201"/>
<dbReference type="HOGENOM" id="CLU_015367_0_1_1"/>
<dbReference type="InParanoid" id="Q7TN33"/>
<dbReference type="OrthoDB" id="410044at2759"/>
<dbReference type="PhylomeDB" id="Q7TN33"/>
<dbReference type="TreeFam" id="TF314924"/>
<dbReference type="BioGRID-ORCS" id="76183">
    <property type="hits" value="0 hits in 78 CRISPR screens"/>
</dbReference>
<dbReference type="PRO" id="PR:Q7TN33"/>
<dbReference type="Proteomes" id="UP000000589">
    <property type="component" value="Chromosome 9"/>
</dbReference>
<dbReference type="RNAct" id="Q7TN33">
    <property type="molecule type" value="protein"/>
</dbReference>
<dbReference type="Bgee" id="ENSMUSG00000032297">
    <property type="expression patterns" value="Expressed in arcuate nucleus of hypothalamus and 89 other cell types or tissues"/>
</dbReference>
<dbReference type="ExpressionAtlas" id="Q7TN33">
    <property type="expression patterns" value="baseline and differential"/>
</dbReference>
<dbReference type="GO" id="GO:0005737">
    <property type="term" value="C:cytoplasm"/>
    <property type="evidence" value="ECO:0000314"/>
    <property type="project" value="MGI"/>
</dbReference>
<dbReference type="GO" id="GO:0005634">
    <property type="term" value="C:nucleus"/>
    <property type="evidence" value="ECO:0007669"/>
    <property type="project" value="UniProtKB-SubCell"/>
</dbReference>
<dbReference type="GO" id="GO:0045202">
    <property type="term" value="C:synapse"/>
    <property type="evidence" value="ECO:0007669"/>
    <property type="project" value="GOC"/>
</dbReference>
<dbReference type="GO" id="GO:0003723">
    <property type="term" value="F:RNA binding"/>
    <property type="evidence" value="ECO:0007669"/>
    <property type="project" value="UniProtKB-KW"/>
</dbReference>
<dbReference type="GO" id="GO:0006397">
    <property type="term" value="P:mRNA processing"/>
    <property type="evidence" value="ECO:0007669"/>
    <property type="project" value="UniProtKB-KW"/>
</dbReference>
<dbReference type="GO" id="GO:0099153">
    <property type="term" value="P:synaptic transmission, serotonergic"/>
    <property type="evidence" value="ECO:0000315"/>
    <property type="project" value="MGI"/>
</dbReference>
<dbReference type="GO" id="GO:0071625">
    <property type="term" value="P:vocalization behavior"/>
    <property type="evidence" value="ECO:0000315"/>
    <property type="project" value="MGI"/>
</dbReference>
<dbReference type="CDD" id="cd12632">
    <property type="entry name" value="RRM1_CELF3_4_5_6"/>
    <property type="match status" value="1"/>
</dbReference>
<dbReference type="CDD" id="cd12635">
    <property type="entry name" value="RRM2_CELF3_4_5_6"/>
    <property type="match status" value="1"/>
</dbReference>
<dbReference type="CDD" id="cd12639">
    <property type="entry name" value="RRM3_CELF3_4_5_6"/>
    <property type="match status" value="1"/>
</dbReference>
<dbReference type="FunFam" id="3.30.70.330:FF:000007">
    <property type="entry name" value="CUGBP Elav-like family member 4 isoform 3"/>
    <property type="match status" value="1"/>
</dbReference>
<dbReference type="FunFam" id="3.30.70.330:FF:000010">
    <property type="entry name" value="CUGBP Elav-like family member 4 isoform 3"/>
    <property type="match status" value="1"/>
</dbReference>
<dbReference type="FunFam" id="3.30.70.330:FF:000069">
    <property type="entry name" value="CUGBP Elav-like family member 5 isoform X1"/>
    <property type="match status" value="1"/>
</dbReference>
<dbReference type="Gene3D" id="3.30.70.330">
    <property type="match status" value="3"/>
</dbReference>
<dbReference type="InterPro" id="IPR034648">
    <property type="entry name" value="CELF3/4/5/6_RRM1"/>
</dbReference>
<dbReference type="InterPro" id="IPR012677">
    <property type="entry name" value="Nucleotide-bd_a/b_plait_sf"/>
</dbReference>
<dbReference type="InterPro" id="IPR035979">
    <property type="entry name" value="RBD_domain_sf"/>
</dbReference>
<dbReference type="InterPro" id="IPR000504">
    <property type="entry name" value="RRM_dom"/>
</dbReference>
<dbReference type="PANTHER" id="PTHR24012">
    <property type="entry name" value="RNA BINDING PROTEIN"/>
    <property type="match status" value="1"/>
</dbReference>
<dbReference type="Pfam" id="PF00076">
    <property type="entry name" value="RRM_1"/>
    <property type="match status" value="3"/>
</dbReference>
<dbReference type="SMART" id="SM00360">
    <property type="entry name" value="RRM"/>
    <property type="match status" value="3"/>
</dbReference>
<dbReference type="SUPFAM" id="SSF54928">
    <property type="entry name" value="RNA-binding domain, RBD"/>
    <property type="match status" value="2"/>
</dbReference>
<dbReference type="PROSITE" id="PS50102">
    <property type="entry name" value="RRM"/>
    <property type="match status" value="3"/>
</dbReference>
<comment type="function">
    <text evidence="1">RNA-binding protein implicated in the regulation of pre-mRNA alternative splicing. Mediates exon inclusion and/or exclusion in pre-mRNA that are subject to tissue-specific and developmentally regulated alternative splicing. Specifically activates exon 5 inclusion of TNNT2 in a muscle-specific splicing enhancer (MSE)-dependent manner. Promotes also exon exclusion of INSR pre-mRNA (By similarity).</text>
</comment>
<comment type="subcellular location">
    <subcellularLocation>
        <location evidence="1">Nucleus</location>
    </subcellularLocation>
    <subcellularLocation>
        <location evidence="1">Cytoplasm</location>
    </subcellularLocation>
</comment>
<comment type="alternative products">
    <event type="alternative splicing"/>
    <isoform>
        <id>Q7TN33-1</id>
        <name>1</name>
        <sequence type="displayed"/>
    </isoform>
    <isoform>
        <id>Q7TN33-2</id>
        <name>2</name>
        <sequence type="described" ref="VSP_026849"/>
    </isoform>
</comment>
<comment type="similarity">
    <text evidence="6">Belongs to the CELF/BRUNOL family.</text>
</comment>
<evidence type="ECO:0000250" key="1"/>
<evidence type="ECO:0000255" key="2">
    <source>
        <dbReference type="PROSITE-ProRule" id="PRU00176"/>
    </source>
</evidence>
<evidence type="ECO:0000256" key="3">
    <source>
        <dbReference type="SAM" id="MobiDB-lite"/>
    </source>
</evidence>
<evidence type="ECO:0000303" key="4">
    <source>
    </source>
</evidence>
<evidence type="ECO:0000303" key="5">
    <source>
    </source>
</evidence>
<evidence type="ECO:0000305" key="6"/>
<sequence>MAAAPGGSAPPAGPSPRLAFSTADSGGGMSGLNPGPAVPMKDHDAIKLFVGQIPRGLDEQDLKPLFEEFGRIYELTVLKDRLTGLHKGCAFLTYCARDSALKAQSALHEQKTLPGMNRPIQVKPAASEGRGEDRKLFVGMLGKQQGEEDVRRLFQPFGHIEECTVLRSPDGTSKGCAFVKFGSQGEAQAAIQGLHGSRTMTGASSSLVVKLADTDRERALRRMQQMAGQLGAFHPAPLPLGACGAYTTAILQHQAALLAAAQGPGLGQVAAVAAQMQHVAAFSLVAAPLLPAAANTSPGGNGPGALPGLPAPMGVNGFGSLTPQSNGQPGSDTLYNNGVSPYPAAYPSAYAPASTAFSQQPSALPQQQREGPEGCNLFIYHLPQEFGDAELIQTFLPFGAVVSAKVFVDRATNQSKCFGFVSFDNPTSAQTAIQAMNGFQIGMKRLKVQLKRPKDANRPY</sequence>
<gene>
    <name type="primary">Celf6</name>
    <name type="synonym">Brunol6</name>
</gene>
<name>CELF6_MOUSE</name>
<reference key="1">
    <citation type="journal article" date="2005" name="Science">
        <title>The transcriptional landscape of the mammalian genome.</title>
        <authorList>
            <person name="Carninci P."/>
            <person name="Kasukawa T."/>
            <person name="Katayama S."/>
            <person name="Gough J."/>
            <person name="Frith M.C."/>
            <person name="Maeda N."/>
            <person name="Oyama R."/>
            <person name="Ravasi T."/>
            <person name="Lenhard B."/>
            <person name="Wells C."/>
            <person name="Kodzius R."/>
            <person name="Shimokawa K."/>
            <person name="Bajic V.B."/>
            <person name="Brenner S.E."/>
            <person name="Batalov S."/>
            <person name="Forrest A.R."/>
            <person name="Zavolan M."/>
            <person name="Davis M.J."/>
            <person name="Wilming L.G."/>
            <person name="Aidinis V."/>
            <person name="Allen J.E."/>
            <person name="Ambesi-Impiombato A."/>
            <person name="Apweiler R."/>
            <person name="Aturaliya R.N."/>
            <person name="Bailey T.L."/>
            <person name="Bansal M."/>
            <person name="Baxter L."/>
            <person name="Beisel K.W."/>
            <person name="Bersano T."/>
            <person name="Bono H."/>
            <person name="Chalk A.M."/>
            <person name="Chiu K.P."/>
            <person name="Choudhary V."/>
            <person name="Christoffels A."/>
            <person name="Clutterbuck D.R."/>
            <person name="Crowe M.L."/>
            <person name="Dalla E."/>
            <person name="Dalrymple B.P."/>
            <person name="de Bono B."/>
            <person name="Della Gatta G."/>
            <person name="di Bernardo D."/>
            <person name="Down T."/>
            <person name="Engstrom P."/>
            <person name="Fagiolini M."/>
            <person name="Faulkner G."/>
            <person name="Fletcher C.F."/>
            <person name="Fukushima T."/>
            <person name="Furuno M."/>
            <person name="Futaki S."/>
            <person name="Gariboldi M."/>
            <person name="Georgii-Hemming P."/>
            <person name="Gingeras T.R."/>
            <person name="Gojobori T."/>
            <person name="Green R.E."/>
            <person name="Gustincich S."/>
            <person name="Harbers M."/>
            <person name="Hayashi Y."/>
            <person name="Hensch T.K."/>
            <person name="Hirokawa N."/>
            <person name="Hill D."/>
            <person name="Huminiecki L."/>
            <person name="Iacono M."/>
            <person name="Ikeo K."/>
            <person name="Iwama A."/>
            <person name="Ishikawa T."/>
            <person name="Jakt M."/>
            <person name="Kanapin A."/>
            <person name="Katoh M."/>
            <person name="Kawasawa Y."/>
            <person name="Kelso J."/>
            <person name="Kitamura H."/>
            <person name="Kitano H."/>
            <person name="Kollias G."/>
            <person name="Krishnan S.P."/>
            <person name="Kruger A."/>
            <person name="Kummerfeld S.K."/>
            <person name="Kurochkin I.V."/>
            <person name="Lareau L.F."/>
            <person name="Lazarevic D."/>
            <person name="Lipovich L."/>
            <person name="Liu J."/>
            <person name="Liuni S."/>
            <person name="McWilliam S."/>
            <person name="Madan Babu M."/>
            <person name="Madera M."/>
            <person name="Marchionni L."/>
            <person name="Matsuda H."/>
            <person name="Matsuzawa S."/>
            <person name="Miki H."/>
            <person name="Mignone F."/>
            <person name="Miyake S."/>
            <person name="Morris K."/>
            <person name="Mottagui-Tabar S."/>
            <person name="Mulder N."/>
            <person name="Nakano N."/>
            <person name="Nakauchi H."/>
            <person name="Ng P."/>
            <person name="Nilsson R."/>
            <person name="Nishiguchi S."/>
            <person name="Nishikawa S."/>
            <person name="Nori F."/>
            <person name="Ohara O."/>
            <person name="Okazaki Y."/>
            <person name="Orlando V."/>
            <person name="Pang K.C."/>
            <person name="Pavan W.J."/>
            <person name="Pavesi G."/>
            <person name="Pesole G."/>
            <person name="Petrovsky N."/>
            <person name="Piazza S."/>
            <person name="Reed J."/>
            <person name="Reid J.F."/>
            <person name="Ring B.Z."/>
            <person name="Ringwald M."/>
            <person name="Rost B."/>
            <person name="Ruan Y."/>
            <person name="Salzberg S.L."/>
            <person name="Sandelin A."/>
            <person name="Schneider C."/>
            <person name="Schoenbach C."/>
            <person name="Sekiguchi K."/>
            <person name="Semple C.A."/>
            <person name="Seno S."/>
            <person name="Sessa L."/>
            <person name="Sheng Y."/>
            <person name="Shibata Y."/>
            <person name="Shimada H."/>
            <person name="Shimada K."/>
            <person name="Silva D."/>
            <person name="Sinclair B."/>
            <person name="Sperling S."/>
            <person name="Stupka E."/>
            <person name="Sugiura K."/>
            <person name="Sultana R."/>
            <person name="Takenaka Y."/>
            <person name="Taki K."/>
            <person name="Tammoja K."/>
            <person name="Tan S.L."/>
            <person name="Tang S."/>
            <person name="Taylor M.S."/>
            <person name="Tegner J."/>
            <person name="Teichmann S.A."/>
            <person name="Ueda H.R."/>
            <person name="van Nimwegen E."/>
            <person name="Verardo R."/>
            <person name="Wei C.L."/>
            <person name="Yagi K."/>
            <person name="Yamanishi H."/>
            <person name="Zabarovsky E."/>
            <person name="Zhu S."/>
            <person name="Zimmer A."/>
            <person name="Hide W."/>
            <person name="Bult C."/>
            <person name="Grimmond S.M."/>
            <person name="Teasdale R.D."/>
            <person name="Liu E.T."/>
            <person name="Brusic V."/>
            <person name="Quackenbush J."/>
            <person name="Wahlestedt C."/>
            <person name="Mattick J.S."/>
            <person name="Hume D.A."/>
            <person name="Kai C."/>
            <person name="Sasaki D."/>
            <person name="Tomaru Y."/>
            <person name="Fukuda S."/>
            <person name="Kanamori-Katayama M."/>
            <person name="Suzuki M."/>
            <person name="Aoki J."/>
            <person name="Arakawa T."/>
            <person name="Iida J."/>
            <person name="Imamura K."/>
            <person name="Itoh M."/>
            <person name="Kato T."/>
            <person name="Kawaji H."/>
            <person name="Kawagashira N."/>
            <person name="Kawashima T."/>
            <person name="Kojima M."/>
            <person name="Kondo S."/>
            <person name="Konno H."/>
            <person name="Nakano K."/>
            <person name="Ninomiya N."/>
            <person name="Nishio T."/>
            <person name="Okada M."/>
            <person name="Plessy C."/>
            <person name="Shibata K."/>
            <person name="Shiraki T."/>
            <person name="Suzuki S."/>
            <person name="Tagami M."/>
            <person name="Waki K."/>
            <person name="Watahiki A."/>
            <person name="Okamura-Oho Y."/>
            <person name="Suzuki H."/>
            <person name="Kawai J."/>
            <person name="Hayashizaki Y."/>
        </authorList>
    </citation>
    <scope>NUCLEOTIDE SEQUENCE [LARGE SCALE MRNA] (ISOFORM 2)</scope>
    <source>
        <strain>C57BL/6J</strain>
        <tissue>Diencephalon</tissue>
    </source>
</reference>
<reference key="2">
    <citation type="journal article" date="2004" name="Genome Res.">
        <title>The status, quality, and expansion of the NIH full-length cDNA project: the Mammalian Gene Collection (MGC).</title>
        <authorList>
            <consortium name="The MGC Project Team"/>
        </authorList>
    </citation>
    <scope>NUCLEOTIDE SEQUENCE [LARGE SCALE MRNA] (ISOFORMS 1 AND 2)</scope>
    <source>
        <strain>C57BL/6J</strain>
        <tissue>Brain</tissue>
    </source>
</reference>
<proteinExistence type="evidence at transcript level"/>
<feature type="chain" id="PRO_0000295230" description="CUGBP Elav-like family member 6">
    <location>
        <begin position="1"/>
        <end position="460"/>
    </location>
</feature>
<feature type="domain" description="RRM 1" evidence="2">
    <location>
        <begin position="46"/>
        <end position="127"/>
    </location>
</feature>
<feature type="domain" description="RRM 2" evidence="2">
    <location>
        <begin position="134"/>
        <end position="214"/>
    </location>
</feature>
<feature type="domain" description="RRM 3" evidence="2">
    <location>
        <begin position="375"/>
        <end position="453"/>
    </location>
</feature>
<feature type="region of interest" description="Disordered" evidence="3">
    <location>
        <begin position="1"/>
        <end position="37"/>
    </location>
</feature>
<feature type="region of interest" description="Disordered" evidence="3">
    <location>
        <begin position="316"/>
        <end position="336"/>
    </location>
</feature>
<feature type="compositionally biased region" description="Low complexity" evidence="3">
    <location>
        <begin position="1"/>
        <end position="10"/>
    </location>
</feature>
<feature type="compositionally biased region" description="Polar residues" evidence="3">
    <location>
        <begin position="319"/>
        <end position="336"/>
    </location>
</feature>
<feature type="splice variant" id="VSP_026849" description="In isoform 2." evidence="4 5">
    <location>
        <begin position="1"/>
        <end position="115"/>
    </location>
</feature>
<organism>
    <name type="scientific">Mus musculus</name>
    <name type="common">Mouse</name>
    <dbReference type="NCBI Taxonomy" id="10090"/>
    <lineage>
        <taxon>Eukaryota</taxon>
        <taxon>Metazoa</taxon>
        <taxon>Chordata</taxon>
        <taxon>Craniata</taxon>
        <taxon>Vertebrata</taxon>
        <taxon>Euteleostomi</taxon>
        <taxon>Mammalia</taxon>
        <taxon>Eutheria</taxon>
        <taxon>Euarchontoglires</taxon>
        <taxon>Glires</taxon>
        <taxon>Rodentia</taxon>
        <taxon>Myomorpha</taxon>
        <taxon>Muroidea</taxon>
        <taxon>Muridae</taxon>
        <taxon>Murinae</taxon>
        <taxon>Mus</taxon>
        <taxon>Mus</taxon>
    </lineage>
</organism>